<feature type="chain" id="PRO_1000119547" description="1-deoxy-D-xylulose-5-phosphate synthase">
    <location>
        <begin position="1"/>
        <end position="620"/>
    </location>
</feature>
<feature type="binding site" evidence="1">
    <location>
        <position position="80"/>
    </location>
    <ligand>
        <name>thiamine diphosphate</name>
        <dbReference type="ChEBI" id="CHEBI:58937"/>
    </ligand>
</feature>
<feature type="binding site" evidence="1">
    <location>
        <begin position="121"/>
        <end position="123"/>
    </location>
    <ligand>
        <name>thiamine diphosphate</name>
        <dbReference type="ChEBI" id="CHEBI:58937"/>
    </ligand>
</feature>
<feature type="binding site" evidence="1">
    <location>
        <position position="152"/>
    </location>
    <ligand>
        <name>Mg(2+)</name>
        <dbReference type="ChEBI" id="CHEBI:18420"/>
    </ligand>
</feature>
<feature type="binding site" evidence="1">
    <location>
        <begin position="153"/>
        <end position="154"/>
    </location>
    <ligand>
        <name>thiamine diphosphate</name>
        <dbReference type="ChEBI" id="CHEBI:58937"/>
    </ligand>
</feature>
<feature type="binding site" evidence="1">
    <location>
        <position position="181"/>
    </location>
    <ligand>
        <name>Mg(2+)</name>
        <dbReference type="ChEBI" id="CHEBI:18420"/>
    </ligand>
</feature>
<feature type="binding site" evidence="1">
    <location>
        <position position="181"/>
    </location>
    <ligand>
        <name>thiamine diphosphate</name>
        <dbReference type="ChEBI" id="CHEBI:58937"/>
    </ligand>
</feature>
<feature type="binding site" evidence="1">
    <location>
        <position position="288"/>
    </location>
    <ligand>
        <name>thiamine diphosphate</name>
        <dbReference type="ChEBI" id="CHEBI:58937"/>
    </ligand>
</feature>
<feature type="binding site" evidence="1">
    <location>
        <position position="370"/>
    </location>
    <ligand>
        <name>thiamine diphosphate</name>
        <dbReference type="ChEBI" id="CHEBI:58937"/>
    </ligand>
</feature>
<reference key="1">
    <citation type="journal article" date="2009" name="PLoS Genet.">
        <title>Organised genome dynamics in the Escherichia coli species results in highly diverse adaptive paths.</title>
        <authorList>
            <person name="Touchon M."/>
            <person name="Hoede C."/>
            <person name="Tenaillon O."/>
            <person name="Barbe V."/>
            <person name="Baeriswyl S."/>
            <person name="Bidet P."/>
            <person name="Bingen E."/>
            <person name="Bonacorsi S."/>
            <person name="Bouchier C."/>
            <person name="Bouvet O."/>
            <person name="Calteau A."/>
            <person name="Chiapello H."/>
            <person name="Clermont O."/>
            <person name="Cruveiller S."/>
            <person name="Danchin A."/>
            <person name="Diard M."/>
            <person name="Dossat C."/>
            <person name="Karoui M.E."/>
            <person name="Frapy E."/>
            <person name="Garry L."/>
            <person name="Ghigo J.M."/>
            <person name="Gilles A.M."/>
            <person name="Johnson J."/>
            <person name="Le Bouguenec C."/>
            <person name="Lescat M."/>
            <person name="Mangenot S."/>
            <person name="Martinez-Jehanne V."/>
            <person name="Matic I."/>
            <person name="Nassif X."/>
            <person name="Oztas S."/>
            <person name="Petit M.A."/>
            <person name="Pichon C."/>
            <person name="Rouy Z."/>
            <person name="Ruf C.S."/>
            <person name="Schneider D."/>
            <person name="Tourret J."/>
            <person name="Vacherie B."/>
            <person name="Vallenet D."/>
            <person name="Medigue C."/>
            <person name="Rocha E.P.C."/>
            <person name="Denamur E."/>
        </authorList>
    </citation>
    <scope>NUCLEOTIDE SEQUENCE [LARGE SCALE GENOMIC DNA]</scope>
    <source>
        <strain>IAI1</strain>
    </source>
</reference>
<accession>B7M3Q9</accession>
<name>DXS_ECO8A</name>
<organism>
    <name type="scientific">Escherichia coli O8 (strain IAI1)</name>
    <dbReference type="NCBI Taxonomy" id="585034"/>
    <lineage>
        <taxon>Bacteria</taxon>
        <taxon>Pseudomonadati</taxon>
        <taxon>Pseudomonadota</taxon>
        <taxon>Gammaproteobacteria</taxon>
        <taxon>Enterobacterales</taxon>
        <taxon>Enterobacteriaceae</taxon>
        <taxon>Escherichia</taxon>
    </lineage>
</organism>
<comment type="function">
    <text evidence="1">Catalyzes the acyloin condensation reaction between C atoms 2 and 3 of pyruvate and glyceraldehyde 3-phosphate to yield 1-deoxy-D-xylulose-5-phosphate (DXP).</text>
</comment>
<comment type="catalytic activity">
    <reaction evidence="1">
        <text>D-glyceraldehyde 3-phosphate + pyruvate + H(+) = 1-deoxy-D-xylulose 5-phosphate + CO2</text>
        <dbReference type="Rhea" id="RHEA:12605"/>
        <dbReference type="ChEBI" id="CHEBI:15361"/>
        <dbReference type="ChEBI" id="CHEBI:15378"/>
        <dbReference type="ChEBI" id="CHEBI:16526"/>
        <dbReference type="ChEBI" id="CHEBI:57792"/>
        <dbReference type="ChEBI" id="CHEBI:59776"/>
        <dbReference type="EC" id="2.2.1.7"/>
    </reaction>
</comment>
<comment type="cofactor">
    <cofactor evidence="1">
        <name>Mg(2+)</name>
        <dbReference type="ChEBI" id="CHEBI:18420"/>
    </cofactor>
    <text evidence="1">Binds 1 Mg(2+) ion per subunit.</text>
</comment>
<comment type="cofactor">
    <cofactor evidence="1">
        <name>thiamine diphosphate</name>
        <dbReference type="ChEBI" id="CHEBI:58937"/>
    </cofactor>
    <text evidence="1">Binds 1 thiamine pyrophosphate per subunit.</text>
</comment>
<comment type="pathway">
    <text evidence="1">Metabolic intermediate biosynthesis; 1-deoxy-D-xylulose 5-phosphate biosynthesis; 1-deoxy-D-xylulose 5-phosphate from D-glyceraldehyde 3-phosphate and pyruvate: step 1/1.</text>
</comment>
<comment type="subunit">
    <text evidence="1">Homodimer.</text>
</comment>
<comment type="similarity">
    <text evidence="1">Belongs to the transketolase family. DXPS subfamily.</text>
</comment>
<dbReference type="EC" id="2.2.1.7" evidence="1"/>
<dbReference type="EMBL" id="CU928160">
    <property type="protein sequence ID" value="CAQ97292.1"/>
    <property type="molecule type" value="Genomic_DNA"/>
</dbReference>
<dbReference type="RefSeq" id="WP_000006806.1">
    <property type="nucleotide sequence ID" value="NC_011741.1"/>
</dbReference>
<dbReference type="SMR" id="B7M3Q9"/>
<dbReference type="KEGG" id="ecr:ECIAI1_0420"/>
<dbReference type="HOGENOM" id="CLU_009227_1_4_6"/>
<dbReference type="UniPathway" id="UPA00064">
    <property type="reaction ID" value="UER00091"/>
</dbReference>
<dbReference type="GO" id="GO:0005829">
    <property type="term" value="C:cytosol"/>
    <property type="evidence" value="ECO:0007669"/>
    <property type="project" value="TreeGrafter"/>
</dbReference>
<dbReference type="GO" id="GO:0008661">
    <property type="term" value="F:1-deoxy-D-xylulose-5-phosphate synthase activity"/>
    <property type="evidence" value="ECO:0007669"/>
    <property type="project" value="UniProtKB-UniRule"/>
</dbReference>
<dbReference type="GO" id="GO:0000287">
    <property type="term" value="F:magnesium ion binding"/>
    <property type="evidence" value="ECO:0007669"/>
    <property type="project" value="UniProtKB-UniRule"/>
</dbReference>
<dbReference type="GO" id="GO:0030976">
    <property type="term" value="F:thiamine pyrophosphate binding"/>
    <property type="evidence" value="ECO:0007669"/>
    <property type="project" value="UniProtKB-UniRule"/>
</dbReference>
<dbReference type="GO" id="GO:0052865">
    <property type="term" value="P:1-deoxy-D-xylulose 5-phosphate biosynthetic process"/>
    <property type="evidence" value="ECO:0007669"/>
    <property type="project" value="UniProtKB-UniPathway"/>
</dbReference>
<dbReference type="GO" id="GO:0019288">
    <property type="term" value="P:isopentenyl diphosphate biosynthetic process, methylerythritol 4-phosphate pathway"/>
    <property type="evidence" value="ECO:0007669"/>
    <property type="project" value="TreeGrafter"/>
</dbReference>
<dbReference type="GO" id="GO:0016114">
    <property type="term" value="P:terpenoid biosynthetic process"/>
    <property type="evidence" value="ECO:0007669"/>
    <property type="project" value="UniProtKB-UniRule"/>
</dbReference>
<dbReference type="GO" id="GO:0009228">
    <property type="term" value="P:thiamine biosynthetic process"/>
    <property type="evidence" value="ECO:0007669"/>
    <property type="project" value="UniProtKB-UniRule"/>
</dbReference>
<dbReference type="CDD" id="cd02007">
    <property type="entry name" value="TPP_DXS"/>
    <property type="match status" value="1"/>
</dbReference>
<dbReference type="CDD" id="cd07033">
    <property type="entry name" value="TPP_PYR_DXS_TK_like"/>
    <property type="match status" value="1"/>
</dbReference>
<dbReference type="FunFam" id="3.40.50.920:FF:000002">
    <property type="entry name" value="1-deoxy-D-xylulose-5-phosphate synthase"/>
    <property type="match status" value="1"/>
</dbReference>
<dbReference type="FunFam" id="3.40.50.970:FF:000005">
    <property type="entry name" value="1-deoxy-D-xylulose-5-phosphate synthase"/>
    <property type="match status" value="1"/>
</dbReference>
<dbReference type="Gene3D" id="3.40.50.920">
    <property type="match status" value="1"/>
</dbReference>
<dbReference type="Gene3D" id="3.40.50.970">
    <property type="match status" value="2"/>
</dbReference>
<dbReference type="HAMAP" id="MF_00315">
    <property type="entry name" value="DXP_synth"/>
    <property type="match status" value="1"/>
</dbReference>
<dbReference type="InterPro" id="IPR005477">
    <property type="entry name" value="Dxylulose-5-P_synthase"/>
</dbReference>
<dbReference type="InterPro" id="IPR029061">
    <property type="entry name" value="THDP-binding"/>
</dbReference>
<dbReference type="InterPro" id="IPR009014">
    <property type="entry name" value="Transketo_C/PFOR_II"/>
</dbReference>
<dbReference type="InterPro" id="IPR005475">
    <property type="entry name" value="Transketolase-like_Pyr-bd"/>
</dbReference>
<dbReference type="InterPro" id="IPR020826">
    <property type="entry name" value="Transketolase_BS"/>
</dbReference>
<dbReference type="InterPro" id="IPR033248">
    <property type="entry name" value="Transketolase_C"/>
</dbReference>
<dbReference type="InterPro" id="IPR049557">
    <property type="entry name" value="Transketolase_CS"/>
</dbReference>
<dbReference type="NCBIfam" id="TIGR00204">
    <property type="entry name" value="dxs"/>
    <property type="match status" value="1"/>
</dbReference>
<dbReference type="NCBIfam" id="NF003933">
    <property type="entry name" value="PRK05444.2-2"/>
    <property type="match status" value="1"/>
</dbReference>
<dbReference type="PANTHER" id="PTHR43322">
    <property type="entry name" value="1-D-DEOXYXYLULOSE 5-PHOSPHATE SYNTHASE-RELATED"/>
    <property type="match status" value="1"/>
</dbReference>
<dbReference type="PANTHER" id="PTHR43322:SF5">
    <property type="entry name" value="1-DEOXY-D-XYLULOSE-5-PHOSPHATE SYNTHASE, CHLOROPLASTIC"/>
    <property type="match status" value="1"/>
</dbReference>
<dbReference type="Pfam" id="PF13292">
    <property type="entry name" value="DXP_synthase_N"/>
    <property type="match status" value="1"/>
</dbReference>
<dbReference type="Pfam" id="PF02779">
    <property type="entry name" value="Transket_pyr"/>
    <property type="match status" value="1"/>
</dbReference>
<dbReference type="Pfam" id="PF02780">
    <property type="entry name" value="Transketolase_C"/>
    <property type="match status" value="1"/>
</dbReference>
<dbReference type="SMART" id="SM00861">
    <property type="entry name" value="Transket_pyr"/>
    <property type="match status" value="1"/>
</dbReference>
<dbReference type="SUPFAM" id="SSF52518">
    <property type="entry name" value="Thiamin diphosphate-binding fold (THDP-binding)"/>
    <property type="match status" value="2"/>
</dbReference>
<dbReference type="SUPFAM" id="SSF52922">
    <property type="entry name" value="TK C-terminal domain-like"/>
    <property type="match status" value="1"/>
</dbReference>
<dbReference type="PROSITE" id="PS00801">
    <property type="entry name" value="TRANSKETOLASE_1"/>
    <property type="match status" value="1"/>
</dbReference>
<dbReference type="PROSITE" id="PS00802">
    <property type="entry name" value="TRANSKETOLASE_2"/>
    <property type="match status" value="1"/>
</dbReference>
<protein>
    <recommendedName>
        <fullName evidence="1">1-deoxy-D-xylulose-5-phosphate synthase</fullName>
        <ecNumber evidence="1">2.2.1.7</ecNumber>
    </recommendedName>
    <alternativeName>
        <fullName evidence="1">1-deoxyxylulose-5-phosphate synthase</fullName>
        <shortName evidence="1">DXP synthase</shortName>
        <shortName evidence="1">DXPS</shortName>
    </alternativeName>
</protein>
<sequence>MSFDIAKYPTLALVDSTQELRLLPKESLPKLCDELRRYLLDSVSRSSGHFASGLGTVELTVALHYVYNTPFDQLIWDVGHQAYPHKILTGRRDKIGTIRQKGGLHPFPWRGESEYDVLSVGHSSTSISAGIGIAVAAEKEGKNRRTVCVIGDGAITAGMAFEAMNHAGDIRPDMLVVLNDNEMSISENVGALNNHLAQLLSGKLYSSLREGGKKVFSGVPPIKELLKRTEEHIKGMVVPGTLFEELGFNYIGPVDGHDVLGLITTLKNMRDLKGPQFLHIMTKKGRGYEPAEKDPITFHAVPKFDPSSGCLPKSSGGLPSYSKIFGDWLCETAAKDNKLMAITPAMREGSGMVEFSRKFPDRYFDVAIAEQHAVTFAAGLAIGGYKPIVAIYSTFLQRAYDQVLHDVAIQKLPVLFAIDRAGIVGADGQTHQGAFDLSYLRCIPEMVIMTPSDENECRQMLYTGYHYNDGPSAVRYPRGNAVGVELTPLEKLPIGKGIVKRRGEKLAILNFGTLMPDAAKVAESLNATLVDMRFVKPLDEALILEMAASHEALVTVEENAIMGGAGSGVNEVLMAHRKPVPVLNIGLPDFFIPQGTQEEMRAELGLDAAGMEAKIKAWLA</sequence>
<keyword id="KW-0414">Isoprene biosynthesis</keyword>
<keyword id="KW-0460">Magnesium</keyword>
<keyword id="KW-0479">Metal-binding</keyword>
<keyword id="KW-0784">Thiamine biosynthesis</keyword>
<keyword id="KW-0786">Thiamine pyrophosphate</keyword>
<keyword id="KW-0808">Transferase</keyword>
<gene>
    <name evidence="1" type="primary">dxs</name>
    <name type="ordered locus">ECIAI1_0420</name>
</gene>
<proteinExistence type="inferred from homology"/>
<evidence type="ECO:0000255" key="1">
    <source>
        <dbReference type="HAMAP-Rule" id="MF_00315"/>
    </source>
</evidence>